<evidence type="ECO:0000255" key="1">
    <source>
        <dbReference type="HAMAP-Rule" id="MF_01043"/>
    </source>
</evidence>
<organism>
    <name type="scientific">Haemophilus influenzae (strain ATCC 51907 / DSM 11121 / KW20 / Rd)</name>
    <dbReference type="NCBI Taxonomy" id="71421"/>
    <lineage>
        <taxon>Bacteria</taxon>
        <taxon>Pseudomonadati</taxon>
        <taxon>Pseudomonadota</taxon>
        <taxon>Gammaproteobacteria</taxon>
        <taxon>Pasteurellales</taxon>
        <taxon>Pasteurellaceae</taxon>
        <taxon>Haemophilus</taxon>
    </lineage>
</organism>
<gene>
    <name evidence="1" type="primary">plsY</name>
    <name type="ordered locus">HI_0266</name>
</gene>
<dbReference type="EC" id="2.3.1.275" evidence="1"/>
<dbReference type="EMBL" id="L42023">
    <property type="protein sequence ID" value="AAC21932.1"/>
    <property type="molecule type" value="Genomic_DNA"/>
</dbReference>
<dbReference type="EMBL" id="AF536755">
    <property type="protein sequence ID" value="AAQ10748.1"/>
    <property type="molecule type" value="Genomic_DNA"/>
</dbReference>
<dbReference type="EMBL" id="AF545479">
    <property type="protein sequence ID" value="AAQ11963.1"/>
    <property type="molecule type" value="Genomic_DNA"/>
</dbReference>
<dbReference type="EMBL" id="AF536754">
    <property type="protein sequence ID" value="AAQ10742.1"/>
    <property type="molecule type" value="Genomic_DNA"/>
</dbReference>
<dbReference type="PIR" id="E64146">
    <property type="entry name" value="E64146"/>
</dbReference>
<dbReference type="RefSeq" id="NP_438435.1">
    <property type="nucleotide sequence ID" value="NC_000907.1"/>
</dbReference>
<dbReference type="SMR" id="P44603"/>
<dbReference type="STRING" id="71421.HI_0266"/>
<dbReference type="EnsemblBacteria" id="AAC21932">
    <property type="protein sequence ID" value="AAC21932"/>
    <property type="gene ID" value="HI_0266"/>
</dbReference>
<dbReference type="KEGG" id="hin:HI_0266"/>
<dbReference type="PATRIC" id="fig|71421.8.peg.281"/>
<dbReference type="eggNOG" id="COG0344">
    <property type="taxonomic scope" value="Bacteria"/>
</dbReference>
<dbReference type="HOGENOM" id="CLU_081254_0_2_6"/>
<dbReference type="OrthoDB" id="9777124at2"/>
<dbReference type="PhylomeDB" id="P44603"/>
<dbReference type="BioCyc" id="HINF71421:G1GJ1-281-MONOMER"/>
<dbReference type="UniPathway" id="UPA00085"/>
<dbReference type="Proteomes" id="UP000000579">
    <property type="component" value="Chromosome"/>
</dbReference>
<dbReference type="GO" id="GO:0005886">
    <property type="term" value="C:plasma membrane"/>
    <property type="evidence" value="ECO:0000318"/>
    <property type="project" value="GO_Central"/>
</dbReference>
<dbReference type="GO" id="GO:0043772">
    <property type="term" value="F:acyl-phosphate glycerol-3-phosphate acyltransferase activity"/>
    <property type="evidence" value="ECO:0007669"/>
    <property type="project" value="UniProtKB-UniRule"/>
</dbReference>
<dbReference type="GO" id="GO:0008654">
    <property type="term" value="P:phospholipid biosynthetic process"/>
    <property type="evidence" value="ECO:0007669"/>
    <property type="project" value="UniProtKB-UniRule"/>
</dbReference>
<dbReference type="HAMAP" id="MF_01043">
    <property type="entry name" value="PlsY"/>
    <property type="match status" value="1"/>
</dbReference>
<dbReference type="InterPro" id="IPR003811">
    <property type="entry name" value="G3P_acylTferase_PlsY"/>
</dbReference>
<dbReference type="NCBIfam" id="TIGR00023">
    <property type="entry name" value="glycerol-3-phosphate 1-O-acyltransferase PlsY"/>
    <property type="match status" value="1"/>
</dbReference>
<dbReference type="PANTHER" id="PTHR30309:SF0">
    <property type="entry name" value="GLYCEROL-3-PHOSPHATE ACYLTRANSFERASE-RELATED"/>
    <property type="match status" value="1"/>
</dbReference>
<dbReference type="PANTHER" id="PTHR30309">
    <property type="entry name" value="INNER MEMBRANE PROTEIN YGIH"/>
    <property type="match status" value="1"/>
</dbReference>
<dbReference type="Pfam" id="PF02660">
    <property type="entry name" value="G3P_acyltransf"/>
    <property type="match status" value="1"/>
</dbReference>
<dbReference type="SMART" id="SM01207">
    <property type="entry name" value="G3P_acyltransf"/>
    <property type="match status" value="1"/>
</dbReference>
<proteinExistence type="inferred from homology"/>
<comment type="function">
    <text evidence="1">Catalyzes the transfer of an acyl group from acyl-phosphate (acyl-PO(4)) to glycerol-3-phosphate (G3P) to form lysophosphatidic acid (LPA). This enzyme utilizes acyl-phosphate as fatty acyl donor, but not acyl-CoA or acyl-ACP.</text>
</comment>
<comment type="catalytic activity">
    <reaction evidence="1">
        <text>an acyl phosphate + sn-glycerol 3-phosphate = a 1-acyl-sn-glycero-3-phosphate + phosphate</text>
        <dbReference type="Rhea" id="RHEA:34075"/>
        <dbReference type="ChEBI" id="CHEBI:43474"/>
        <dbReference type="ChEBI" id="CHEBI:57597"/>
        <dbReference type="ChEBI" id="CHEBI:57970"/>
        <dbReference type="ChEBI" id="CHEBI:59918"/>
        <dbReference type="EC" id="2.3.1.275"/>
    </reaction>
</comment>
<comment type="pathway">
    <text evidence="1">Lipid metabolism; phospholipid metabolism.</text>
</comment>
<comment type="subunit">
    <text evidence="1">Probably interacts with PlsX.</text>
</comment>
<comment type="subcellular location">
    <subcellularLocation>
        <location evidence="1">Cell inner membrane</location>
        <topology evidence="1">Multi-pass membrane protein</topology>
    </subcellularLocation>
</comment>
<comment type="similarity">
    <text evidence="1">Belongs to the PlsY family.</text>
</comment>
<name>PLSY_HAEIN</name>
<reference key="1">
    <citation type="journal article" date="1995" name="Science">
        <title>Whole-genome random sequencing and assembly of Haemophilus influenzae Rd.</title>
        <authorList>
            <person name="Fleischmann R.D."/>
            <person name="Adams M.D."/>
            <person name="White O."/>
            <person name="Clayton R.A."/>
            <person name="Kirkness E.F."/>
            <person name="Kerlavage A.R."/>
            <person name="Bult C.J."/>
            <person name="Tomb J.-F."/>
            <person name="Dougherty B.A."/>
            <person name="Merrick J.M."/>
            <person name="McKenney K."/>
            <person name="Sutton G.G."/>
            <person name="FitzHugh W."/>
            <person name="Fields C.A."/>
            <person name="Gocayne J.D."/>
            <person name="Scott J.D."/>
            <person name="Shirley R."/>
            <person name="Liu L.-I."/>
            <person name="Glodek A."/>
            <person name="Kelley J.M."/>
            <person name="Weidman J.F."/>
            <person name="Phillips C.A."/>
            <person name="Spriggs T."/>
            <person name="Hedblom E."/>
            <person name="Cotton M.D."/>
            <person name="Utterback T.R."/>
            <person name="Hanna M.C."/>
            <person name="Nguyen D.T."/>
            <person name="Saudek D.M."/>
            <person name="Brandon R.C."/>
            <person name="Fine L.D."/>
            <person name="Fritchman J.L."/>
            <person name="Fuhrmann J.L."/>
            <person name="Geoghagen N.S.M."/>
            <person name="Gnehm C.L."/>
            <person name="McDonald L.A."/>
            <person name="Small K.V."/>
            <person name="Fraser C.M."/>
            <person name="Smith H.O."/>
            <person name="Venter J.C."/>
        </authorList>
    </citation>
    <scope>NUCLEOTIDE SEQUENCE [LARGE SCALE GENOMIC DNA]</scope>
    <source>
        <strain>ATCC 51907 / DSM 11121 / KW20 / Rd</strain>
    </source>
</reference>
<reference key="2">
    <citation type="submission" date="2002-08" db="EMBL/GenBank/DDBJ databases">
        <title>Role of the Hxu operon in the acquisition of heme from heme-albumin complexes by Haemophilus influenzae.</title>
        <authorList>
            <person name="Morton D.J."/>
            <person name="Madore L.C."/>
            <person name="Stull T.L."/>
        </authorList>
    </citation>
    <scope>NUCLEOTIDE SEQUENCE [GENOMIC DNA] OF 1-149</scope>
    <source>
        <strain>E1a / Serotype B</strain>
        <strain>HI1388</strain>
        <strain>HI689 / Serotype B</strain>
    </source>
</reference>
<sequence length="199" mass="22113">MSLFALFYMLFAYLLGSISSAILICRIAGLPDPRQNGSHNPGATNVLRIGNRKSALAVLIFDMLKGMIPVWAGYYLGLTQFELGMVALGACLGHIFPIFFQFKGGKGVATAFGAIAPISWAVAGSMFGTWIFVFLVSGYSSLSAVISALLVPFYVWWFKPEFTFPVALVCCLLIYRHHDNIQRLWRGQEDKVWAKFKKK</sequence>
<feature type="chain" id="PRO_0000188378" description="Glycerol-3-phosphate acyltransferase">
    <location>
        <begin position="1"/>
        <end position="199"/>
    </location>
</feature>
<feature type="transmembrane region" description="Helical" evidence="1">
    <location>
        <begin position="4"/>
        <end position="24"/>
    </location>
</feature>
<feature type="transmembrane region" description="Helical" evidence="1">
    <location>
        <begin position="56"/>
        <end position="76"/>
    </location>
</feature>
<feature type="transmembrane region" description="Helical" evidence="1">
    <location>
        <begin position="80"/>
        <end position="100"/>
    </location>
</feature>
<feature type="transmembrane region" description="Helical" evidence="1">
    <location>
        <begin position="115"/>
        <end position="135"/>
    </location>
</feature>
<feature type="transmembrane region" description="Helical" evidence="1">
    <location>
        <begin position="154"/>
        <end position="176"/>
    </location>
</feature>
<feature type="sequence variant" description="In strain: HI1388.">
    <original>I</original>
    <variation>V</variation>
    <location>
        <position position="18"/>
    </location>
</feature>
<feature type="sequence variant" description="In strain: E1a.">
    <original>IA</original>
    <variation>LT</variation>
    <location>
        <begin position="27"/>
        <end position="28"/>
    </location>
</feature>
<feature type="sequence variant" description="In strain: HI689.">
    <original>S</original>
    <variation>F</variation>
    <location>
        <position position="54"/>
    </location>
</feature>
<protein>
    <recommendedName>
        <fullName evidence="1">Glycerol-3-phosphate acyltransferase</fullName>
    </recommendedName>
    <alternativeName>
        <fullName evidence="1">Acyl-PO4 G3P acyltransferase</fullName>
    </alternativeName>
    <alternativeName>
        <fullName evidence="1">Acyl-phosphate--glycerol-3-phosphate acyltransferase</fullName>
    </alternativeName>
    <alternativeName>
        <fullName evidence="1">G3P acyltransferase</fullName>
        <shortName evidence="1">GPAT</shortName>
        <ecNumber evidence="1">2.3.1.275</ecNumber>
    </alternativeName>
    <alternativeName>
        <fullName evidence="1">Lysophosphatidic acid synthase</fullName>
        <shortName evidence="1">LPA synthase</shortName>
    </alternativeName>
</protein>
<accession>P44603</accession>
<keyword id="KW-0997">Cell inner membrane</keyword>
<keyword id="KW-1003">Cell membrane</keyword>
<keyword id="KW-0444">Lipid biosynthesis</keyword>
<keyword id="KW-0443">Lipid metabolism</keyword>
<keyword id="KW-0472">Membrane</keyword>
<keyword id="KW-0594">Phospholipid biosynthesis</keyword>
<keyword id="KW-1208">Phospholipid metabolism</keyword>
<keyword id="KW-1185">Reference proteome</keyword>
<keyword id="KW-0808">Transferase</keyword>
<keyword id="KW-0812">Transmembrane</keyword>
<keyword id="KW-1133">Transmembrane helix</keyword>